<protein>
    <recommendedName>
        <fullName>Probable serine carboxypeptidase CPVL</fullName>
        <ecNumber>3.4.16.-</ecNumber>
    </recommendedName>
</protein>
<keyword id="KW-0025">Alternative splicing</keyword>
<keyword id="KW-0121">Carboxypeptidase</keyword>
<keyword id="KW-0325">Glycoprotein</keyword>
<keyword id="KW-0378">Hydrolase</keyword>
<keyword id="KW-0645">Protease</keyword>
<keyword id="KW-1185">Reference proteome</keyword>
<keyword id="KW-0732">Signal</keyword>
<keyword id="KW-0865">Zymogen</keyword>
<proteinExistence type="evidence at transcript level"/>
<name>CPVL_MOUSE</name>
<gene>
    <name type="primary">Cpvl</name>
</gene>
<organism>
    <name type="scientific">Mus musculus</name>
    <name type="common">Mouse</name>
    <dbReference type="NCBI Taxonomy" id="10090"/>
    <lineage>
        <taxon>Eukaryota</taxon>
        <taxon>Metazoa</taxon>
        <taxon>Chordata</taxon>
        <taxon>Craniata</taxon>
        <taxon>Vertebrata</taxon>
        <taxon>Euteleostomi</taxon>
        <taxon>Mammalia</taxon>
        <taxon>Eutheria</taxon>
        <taxon>Euarchontoglires</taxon>
        <taxon>Glires</taxon>
        <taxon>Rodentia</taxon>
        <taxon>Myomorpha</taxon>
        <taxon>Muroidea</taxon>
        <taxon>Muridae</taxon>
        <taxon>Murinae</taxon>
        <taxon>Mus</taxon>
        <taxon>Mus</taxon>
    </lineage>
</organism>
<comment type="function">
    <text evidence="1">May be involved in the digestion of phagocytosed particles in the lysosome, participation in an inflammatory protease cascade, and trimming of peptides for antigen presentation.</text>
</comment>
<comment type="alternative products">
    <event type="alternative splicing"/>
    <isoform>
        <id>Q9D3S9-1</id>
        <name>1</name>
        <sequence type="displayed"/>
    </isoform>
    <isoform>
        <id>Q9D3S9-2</id>
        <name>2</name>
        <sequence type="described" ref="VSP_033260"/>
    </isoform>
</comment>
<comment type="similarity">
    <text evidence="5">Belongs to the peptidase S10 family.</text>
</comment>
<evidence type="ECO:0000250" key="1"/>
<evidence type="ECO:0000255" key="2"/>
<evidence type="ECO:0000255" key="3">
    <source>
        <dbReference type="PROSITE-ProRule" id="PRU10074"/>
    </source>
</evidence>
<evidence type="ECO:0000303" key="4">
    <source>
    </source>
</evidence>
<evidence type="ECO:0000305" key="5"/>
<sequence>MVRAKWKMVVSLILFMVSPGDGLFHAVYRSILVSQSFKGDAGQPLFLSPYIKNGKIKEGQRKSMVSPFPGMNDKSYAGYITVNQTYNSNLFFWFFPARMQPEDAPVVLWLQGGPGGSSMFGLFVEHGPYIITSNMTVVARDFPWTFTLSMLYIDNPVGTGFSFTDHFQGYATSEDDVAQDLYSALIQFFTLFPEYAKNDFYVTGESYAGKYVPALAHYIHSLNPVRKFKIRLKGIAIGDAYTDPESIIGGYAAFLYEIGLLDEQQQKYFQKQCSKCVKYIKEQEWMKAFEILDKLLDGDVTTGSSFFQNVTGCTNYYNILQCTEPKEQSYFAKFLTLPQVRQAIHVGNQNFSDGAEVEKHLREDTVKSVKPWLSEIMNYYKVLIYNGQLDIIVAAALTERSLMAMDWKGSRAYRRARRKVWKIFKSDNEVAGYVRRVGKFHQVIVRGGGHILPYDQPMRSFDMINRFIYDRGWEPYNS</sequence>
<dbReference type="EC" id="3.4.16.-"/>
<dbReference type="EMBL" id="AK017087">
    <property type="protein sequence ID" value="BAB30589.1"/>
    <property type="molecule type" value="mRNA"/>
</dbReference>
<dbReference type="EMBL" id="AC073297">
    <property type="status" value="NOT_ANNOTATED_CDS"/>
    <property type="molecule type" value="Genomic_DNA"/>
</dbReference>
<dbReference type="EMBL" id="AC079218">
    <property type="status" value="NOT_ANNOTATED_CDS"/>
    <property type="molecule type" value="Genomic_DNA"/>
</dbReference>
<dbReference type="EMBL" id="BC137839">
    <property type="protein sequence ID" value="AAI37840.1"/>
    <property type="molecule type" value="mRNA"/>
</dbReference>
<dbReference type="CCDS" id="CCDS51777.1">
    <molecule id="Q9D3S9-1"/>
</dbReference>
<dbReference type="CCDS" id="CCDS85050.1">
    <molecule id="Q9D3S9-2"/>
</dbReference>
<dbReference type="RefSeq" id="NP_001276642.1">
    <molecule id="Q9D3S9-1"/>
    <property type="nucleotide sequence ID" value="NM_001289713.1"/>
</dbReference>
<dbReference type="RefSeq" id="NP_001276643.1">
    <molecule id="Q9D3S9-2"/>
    <property type="nucleotide sequence ID" value="NM_001289714.1"/>
</dbReference>
<dbReference type="RefSeq" id="NP_082025.1">
    <molecule id="Q9D3S9-1"/>
    <property type="nucleotide sequence ID" value="NM_027749.2"/>
</dbReference>
<dbReference type="RefSeq" id="XP_006506678.1">
    <molecule id="Q9D3S9-1"/>
    <property type="nucleotide sequence ID" value="XM_006506615.4"/>
</dbReference>
<dbReference type="SMR" id="Q9D3S9"/>
<dbReference type="BioGRID" id="214605">
    <property type="interactions" value="1"/>
</dbReference>
<dbReference type="FunCoup" id="Q9D3S9">
    <property type="interactions" value="26"/>
</dbReference>
<dbReference type="STRING" id="10090.ENSMUSP00000131462"/>
<dbReference type="ESTHER" id="mouse-CPMac">
    <property type="family name" value="Carboxypeptidase_S10"/>
</dbReference>
<dbReference type="MEROPS" id="S10.003"/>
<dbReference type="GlyCosmos" id="Q9D3S9">
    <property type="glycosylation" value="4 sites, No reported glycans"/>
</dbReference>
<dbReference type="GlyGen" id="Q9D3S9">
    <property type="glycosylation" value="4 sites"/>
</dbReference>
<dbReference type="iPTMnet" id="Q9D3S9"/>
<dbReference type="PhosphoSitePlus" id="Q9D3S9"/>
<dbReference type="PaxDb" id="10090-ENSMUSP00000131462"/>
<dbReference type="ProteomicsDB" id="285261">
    <molecule id="Q9D3S9-1"/>
</dbReference>
<dbReference type="ProteomicsDB" id="285262">
    <molecule id="Q9D3S9-2"/>
</dbReference>
<dbReference type="Antibodypedia" id="26062">
    <property type="antibodies" value="190 antibodies from 28 providers"/>
</dbReference>
<dbReference type="DNASU" id="71287"/>
<dbReference type="Ensembl" id="ENSMUST00000166545.2">
    <molecule id="Q9D3S9-1"/>
    <property type="protein sequence ID" value="ENSMUSP00000131462.2"/>
    <property type="gene ID" value="ENSMUSG00000052955.6"/>
</dbReference>
<dbReference type="Ensembl" id="ENSMUST00000203101.3">
    <molecule id="Q9D3S9-2"/>
    <property type="protein sequence ID" value="ENSMUSP00000145288.2"/>
    <property type="gene ID" value="ENSMUSG00000052955.6"/>
</dbReference>
<dbReference type="Ensembl" id="ENSMUST00000204674.3">
    <molecule id="Q9D3S9-1"/>
    <property type="protein sequence ID" value="ENSMUSP00000144942.2"/>
    <property type="gene ID" value="ENSMUSG00000052955.6"/>
</dbReference>
<dbReference type="GeneID" id="71287"/>
<dbReference type="KEGG" id="mmu:71287"/>
<dbReference type="UCSC" id="uc009bzm.3">
    <molecule id="Q9D3S9-2"/>
    <property type="organism name" value="mouse"/>
</dbReference>
<dbReference type="UCSC" id="uc012emc.2">
    <molecule id="Q9D3S9-1"/>
    <property type="organism name" value="mouse"/>
</dbReference>
<dbReference type="AGR" id="MGI:1918537"/>
<dbReference type="CTD" id="54504"/>
<dbReference type="MGI" id="MGI:1918537">
    <property type="gene designation" value="Cpvl"/>
</dbReference>
<dbReference type="VEuPathDB" id="HostDB:ENSMUSG00000052955"/>
<dbReference type="eggNOG" id="KOG1282">
    <property type="taxonomic scope" value="Eukaryota"/>
</dbReference>
<dbReference type="GeneTree" id="ENSGT00940000159498"/>
<dbReference type="HOGENOM" id="CLU_008523_10_1_1"/>
<dbReference type="InParanoid" id="Q9D3S9"/>
<dbReference type="OMA" id="EMADQFV"/>
<dbReference type="OrthoDB" id="443318at2759"/>
<dbReference type="PhylomeDB" id="Q9D3S9"/>
<dbReference type="TreeFam" id="TF354323"/>
<dbReference type="BioGRID-ORCS" id="71287">
    <property type="hits" value="1 hit in 77 CRISPR screens"/>
</dbReference>
<dbReference type="PRO" id="PR:Q9D3S9"/>
<dbReference type="Proteomes" id="UP000000589">
    <property type="component" value="Chromosome 6"/>
</dbReference>
<dbReference type="RNAct" id="Q9D3S9">
    <property type="molecule type" value="protein"/>
</dbReference>
<dbReference type="Bgee" id="ENSMUSG00000052955">
    <property type="expression patterns" value="Expressed in spermatid and 16 other cell types or tissues"/>
</dbReference>
<dbReference type="GO" id="GO:0004185">
    <property type="term" value="F:serine-type carboxypeptidase activity"/>
    <property type="evidence" value="ECO:0007669"/>
    <property type="project" value="InterPro"/>
</dbReference>
<dbReference type="GO" id="GO:0006508">
    <property type="term" value="P:proteolysis"/>
    <property type="evidence" value="ECO:0007669"/>
    <property type="project" value="UniProtKB-KW"/>
</dbReference>
<dbReference type="FunFam" id="3.40.50.1820:FF:000096">
    <property type="entry name" value="Carboxypeptidase vitellogenic-like"/>
    <property type="match status" value="1"/>
</dbReference>
<dbReference type="Gene3D" id="3.40.50.1820">
    <property type="entry name" value="alpha/beta hydrolase"/>
    <property type="match status" value="1"/>
</dbReference>
<dbReference type="InterPro" id="IPR029058">
    <property type="entry name" value="AB_hydrolase_fold"/>
</dbReference>
<dbReference type="InterPro" id="IPR001563">
    <property type="entry name" value="Peptidase_S10"/>
</dbReference>
<dbReference type="InterPro" id="IPR018202">
    <property type="entry name" value="Ser_caboxypep_ser_AS"/>
</dbReference>
<dbReference type="PANTHER" id="PTHR11802:SF472">
    <property type="entry name" value="SERINE CARBOXYPEPTIDASE CPVL-RELATED"/>
    <property type="match status" value="1"/>
</dbReference>
<dbReference type="PANTHER" id="PTHR11802">
    <property type="entry name" value="SERINE PROTEASE FAMILY S10 SERINE CARBOXYPEPTIDASE"/>
    <property type="match status" value="1"/>
</dbReference>
<dbReference type="Pfam" id="PF00450">
    <property type="entry name" value="Peptidase_S10"/>
    <property type="match status" value="1"/>
</dbReference>
<dbReference type="PRINTS" id="PR00724">
    <property type="entry name" value="CRBOXYPTASEC"/>
</dbReference>
<dbReference type="SUPFAM" id="SSF53474">
    <property type="entry name" value="alpha/beta-Hydrolases"/>
    <property type="match status" value="1"/>
</dbReference>
<dbReference type="PROSITE" id="PS00131">
    <property type="entry name" value="CARBOXYPEPT_SER_SER"/>
    <property type="match status" value="1"/>
</dbReference>
<accession>Q9D3S9</accession>
<accession>B2RQB1</accession>
<reference key="1">
    <citation type="journal article" date="2005" name="Science">
        <title>The transcriptional landscape of the mammalian genome.</title>
        <authorList>
            <person name="Carninci P."/>
            <person name="Kasukawa T."/>
            <person name="Katayama S."/>
            <person name="Gough J."/>
            <person name="Frith M.C."/>
            <person name="Maeda N."/>
            <person name="Oyama R."/>
            <person name="Ravasi T."/>
            <person name="Lenhard B."/>
            <person name="Wells C."/>
            <person name="Kodzius R."/>
            <person name="Shimokawa K."/>
            <person name="Bajic V.B."/>
            <person name="Brenner S.E."/>
            <person name="Batalov S."/>
            <person name="Forrest A.R."/>
            <person name="Zavolan M."/>
            <person name="Davis M.J."/>
            <person name="Wilming L.G."/>
            <person name="Aidinis V."/>
            <person name="Allen J.E."/>
            <person name="Ambesi-Impiombato A."/>
            <person name="Apweiler R."/>
            <person name="Aturaliya R.N."/>
            <person name="Bailey T.L."/>
            <person name="Bansal M."/>
            <person name="Baxter L."/>
            <person name="Beisel K.W."/>
            <person name="Bersano T."/>
            <person name="Bono H."/>
            <person name="Chalk A.M."/>
            <person name="Chiu K.P."/>
            <person name="Choudhary V."/>
            <person name="Christoffels A."/>
            <person name="Clutterbuck D.R."/>
            <person name="Crowe M.L."/>
            <person name="Dalla E."/>
            <person name="Dalrymple B.P."/>
            <person name="de Bono B."/>
            <person name="Della Gatta G."/>
            <person name="di Bernardo D."/>
            <person name="Down T."/>
            <person name="Engstrom P."/>
            <person name="Fagiolini M."/>
            <person name="Faulkner G."/>
            <person name="Fletcher C.F."/>
            <person name="Fukushima T."/>
            <person name="Furuno M."/>
            <person name="Futaki S."/>
            <person name="Gariboldi M."/>
            <person name="Georgii-Hemming P."/>
            <person name="Gingeras T.R."/>
            <person name="Gojobori T."/>
            <person name="Green R.E."/>
            <person name="Gustincich S."/>
            <person name="Harbers M."/>
            <person name="Hayashi Y."/>
            <person name="Hensch T.K."/>
            <person name="Hirokawa N."/>
            <person name="Hill D."/>
            <person name="Huminiecki L."/>
            <person name="Iacono M."/>
            <person name="Ikeo K."/>
            <person name="Iwama A."/>
            <person name="Ishikawa T."/>
            <person name="Jakt M."/>
            <person name="Kanapin A."/>
            <person name="Katoh M."/>
            <person name="Kawasawa Y."/>
            <person name="Kelso J."/>
            <person name="Kitamura H."/>
            <person name="Kitano H."/>
            <person name="Kollias G."/>
            <person name="Krishnan S.P."/>
            <person name="Kruger A."/>
            <person name="Kummerfeld S.K."/>
            <person name="Kurochkin I.V."/>
            <person name="Lareau L.F."/>
            <person name="Lazarevic D."/>
            <person name="Lipovich L."/>
            <person name="Liu J."/>
            <person name="Liuni S."/>
            <person name="McWilliam S."/>
            <person name="Madan Babu M."/>
            <person name="Madera M."/>
            <person name="Marchionni L."/>
            <person name="Matsuda H."/>
            <person name="Matsuzawa S."/>
            <person name="Miki H."/>
            <person name="Mignone F."/>
            <person name="Miyake S."/>
            <person name="Morris K."/>
            <person name="Mottagui-Tabar S."/>
            <person name="Mulder N."/>
            <person name="Nakano N."/>
            <person name="Nakauchi H."/>
            <person name="Ng P."/>
            <person name="Nilsson R."/>
            <person name="Nishiguchi S."/>
            <person name="Nishikawa S."/>
            <person name="Nori F."/>
            <person name="Ohara O."/>
            <person name="Okazaki Y."/>
            <person name="Orlando V."/>
            <person name="Pang K.C."/>
            <person name="Pavan W.J."/>
            <person name="Pavesi G."/>
            <person name="Pesole G."/>
            <person name="Petrovsky N."/>
            <person name="Piazza S."/>
            <person name="Reed J."/>
            <person name="Reid J.F."/>
            <person name="Ring B.Z."/>
            <person name="Ringwald M."/>
            <person name="Rost B."/>
            <person name="Ruan Y."/>
            <person name="Salzberg S.L."/>
            <person name="Sandelin A."/>
            <person name="Schneider C."/>
            <person name="Schoenbach C."/>
            <person name="Sekiguchi K."/>
            <person name="Semple C.A."/>
            <person name="Seno S."/>
            <person name="Sessa L."/>
            <person name="Sheng Y."/>
            <person name="Shibata Y."/>
            <person name="Shimada H."/>
            <person name="Shimada K."/>
            <person name="Silva D."/>
            <person name="Sinclair B."/>
            <person name="Sperling S."/>
            <person name="Stupka E."/>
            <person name="Sugiura K."/>
            <person name="Sultana R."/>
            <person name="Takenaka Y."/>
            <person name="Taki K."/>
            <person name="Tammoja K."/>
            <person name="Tan S.L."/>
            <person name="Tang S."/>
            <person name="Taylor M.S."/>
            <person name="Tegner J."/>
            <person name="Teichmann S.A."/>
            <person name="Ueda H.R."/>
            <person name="van Nimwegen E."/>
            <person name="Verardo R."/>
            <person name="Wei C.L."/>
            <person name="Yagi K."/>
            <person name="Yamanishi H."/>
            <person name="Zabarovsky E."/>
            <person name="Zhu S."/>
            <person name="Zimmer A."/>
            <person name="Hide W."/>
            <person name="Bult C."/>
            <person name="Grimmond S.M."/>
            <person name="Teasdale R.D."/>
            <person name="Liu E.T."/>
            <person name="Brusic V."/>
            <person name="Quackenbush J."/>
            <person name="Wahlestedt C."/>
            <person name="Mattick J.S."/>
            <person name="Hume D.A."/>
            <person name="Kai C."/>
            <person name="Sasaki D."/>
            <person name="Tomaru Y."/>
            <person name="Fukuda S."/>
            <person name="Kanamori-Katayama M."/>
            <person name="Suzuki M."/>
            <person name="Aoki J."/>
            <person name="Arakawa T."/>
            <person name="Iida J."/>
            <person name="Imamura K."/>
            <person name="Itoh M."/>
            <person name="Kato T."/>
            <person name="Kawaji H."/>
            <person name="Kawagashira N."/>
            <person name="Kawashima T."/>
            <person name="Kojima M."/>
            <person name="Kondo S."/>
            <person name="Konno H."/>
            <person name="Nakano K."/>
            <person name="Ninomiya N."/>
            <person name="Nishio T."/>
            <person name="Okada M."/>
            <person name="Plessy C."/>
            <person name="Shibata K."/>
            <person name="Shiraki T."/>
            <person name="Suzuki S."/>
            <person name="Tagami M."/>
            <person name="Waki K."/>
            <person name="Watahiki A."/>
            <person name="Okamura-Oho Y."/>
            <person name="Suzuki H."/>
            <person name="Kawai J."/>
            <person name="Hayashizaki Y."/>
        </authorList>
    </citation>
    <scope>NUCLEOTIDE SEQUENCE [LARGE SCALE MRNA] (ISOFORM 2)</scope>
    <source>
        <strain>C57BL/6J</strain>
        <tissue>Testis</tissue>
    </source>
</reference>
<reference key="2">
    <citation type="journal article" date="2009" name="PLoS Biol.">
        <title>Lineage-specific biology revealed by a finished genome assembly of the mouse.</title>
        <authorList>
            <person name="Church D.M."/>
            <person name="Goodstadt L."/>
            <person name="Hillier L.W."/>
            <person name="Zody M.C."/>
            <person name="Goldstein S."/>
            <person name="She X."/>
            <person name="Bult C.J."/>
            <person name="Agarwala R."/>
            <person name="Cherry J.L."/>
            <person name="DiCuccio M."/>
            <person name="Hlavina W."/>
            <person name="Kapustin Y."/>
            <person name="Meric P."/>
            <person name="Maglott D."/>
            <person name="Birtle Z."/>
            <person name="Marques A.C."/>
            <person name="Graves T."/>
            <person name="Zhou S."/>
            <person name="Teague B."/>
            <person name="Potamousis K."/>
            <person name="Churas C."/>
            <person name="Place M."/>
            <person name="Herschleb J."/>
            <person name="Runnheim R."/>
            <person name="Forrest D."/>
            <person name="Amos-Landgraf J."/>
            <person name="Schwartz D.C."/>
            <person name="Cheng Z."/>
            <person name="Lindblad-Toh K."/>
            <person name="Eichler E.E."/>
            <person name="Ponting C.P."/>
        </authorList>
    </citation>
    <scope>NUCLEOTIDE SEQUENCE [LARGE SCALE GENOMIC DNA]</scope>
    <source>
        <strain>C57BL/6J</strain>
    </source>
</reference>
<reference key="3">
    <citation type="journal article" date="2004" name="Genome Res.">
        <title>The status, quality, and expansion of the NIH full-length cDNA project: the Mammalian Gene Collection (MGC).</title>
        <authorList>
            <consortium name="The MGC Project Team"/>
        </authorList>
    </citation>
    <scope>NUCLEOTIDE SEQUENCE [LARGE SCALE MRNA] (ISOFORM 1)</scope>
    <source>
        <tissue>Brain</tissue>
    </source>
</reference>
<feature type="signal peptide" evidence="2">
    <location>
        <begin position="1"/>
        <end position="22"/>
    </location>
</feature>
<feature type="propeptide" id="PRO_0000331586" evidence="2">
    <location>
        <begin position="23"/>
        <end status="unknown"/>
    </location>
</feature>
<feature type="chain" id="PRO_0000331587" description="Probable serine carboxypeptidase CPVL">
    <location>
        <begin status="unknown"/>
        <end position="478"/>
    </location>
</feature>
<feature type="active site" evidence="3">
    <location>
        <position position="206"/>
    </location>
</feature>
<feature type="active site" evidence="3">
    <location>
        <position position="390"/>
    </location>
</feature>
<feature type="active site" evidence="3">
    <location>
        <position position="450"/>
    </location>
</feature>
<feature type="glycosylation site" description="N-linked (GlcNAc...) asparagine" evidence="2">
    <location>
        <position position="83"/>
    </location>
</feature>
<feature type="glycosylation site" description="N-linked (GlcNAc...) asparagine" evidence="2">
    <location>
        <position position="134"/>
    </location>
</feature>
<feature type="glycosylation site" description="N-linked (GlcNAc...) asparagine" evidence="2">
    <location>
        <position position="309"/>
    </location>
</feature>
<feature type="glycosylation site" description="N-linked (GlcNAc...) asparagine" evidence="2">
    <location>
        <position position="350"/>
    </location>
</feature>
<feature type="splice variant" id="VSP_033260" description="In isoform 2." evidence="4">
    <location>
        <begin position="247"/>
        <end position="290"/>
    </location>
</feature>